<name>NU2C1_OENEH</name>
<organism>
    <name type="scientific">Oenothera elata subsp. hookeri</name>
    <name type="common">Hooker's evening primrose</name>
    <name type="synonym">Oenothera hookeri</name>
    <dbReference type="NCBI Taxonomy" id="85636"/>
    <lineage>
        <taxon>Eukaryota</taxon>
        <taxon>Viridiplantae</taxon>
        <taxon>Streptophyta</taxon>
        <taxon>Embryophyta</taxon>
        <taxon>Tracheophyta</taxon>
        <taxon>Spermatophyta</taxon>
        <taxon>Magnoliopsida</taxon>
        <taxon>eudicotyledons</taxon>
        <taxon>Gunneridae</taxon>
        <taxon>Pentapetalae</taxon>
        <taxon>rosids</taxon>
        <taxon>malvids</taxon>
        <taxon>Myrtales</taxon>
        <taxon>Onagraceae</taxon>
        <taxon>Onagroideae</taxon>
        <taxon>Onagreae</taxon>
        <taxon>Oenothera</taxon>
    </lineage>
</organism>
<accession>P0CD10</accession>
<accession>A9IKR9</accession>
<accession>Q9ME36</accession>
<keyword id="KW-0150">Chloroplast</keyword>
<keyword id="KW-0472">Membrane</keyword>
<keyword id="KW-0520">NAD</keyword>
<keyword id="KW-0521">NADP</keyword>
<keyword id="KW-0934">Plastid</keyword>
<keyword id="KW-0618">Plastoquinone</keyword>
<keyword id="KW-0874">Quinone</keyword>
<keyword id="KW-0793">Thylakoid</keyword>
<keyword id="KW-1278">Translocase</keyword>
<keyword id="KW-0812">Transmembrane</keyword>
<keyword id="KW-1133">Transmembrane helix</keyword>
<keyword id="KW-0813">Transport</keyword>
<reference key="1">
    <citation type="journal article" date="2000" name="Mol. Gen. Genet.">
        <title>Complete nucleotide sequence of the Oenothera elata plastid chromosome, representing plastome I of the five distinguishable Euoenothera plastomes.</title>
        <authorList>
            <person name="Hupfer H."/>
            <person name="Swiatek M."/>
            <person name="Hornung S."/>
            <person name="Herrmann R.G."/>
            <person name="Maier R.M."/>
            <person name="Chiu W.-L."/>
            <person name="Sears B."/>
        </authorList>
    </citation>
    <scope>NUCLEOTIDE SEQUENCE [LARGE SCALE GENOMIC DNA]</scope>
    <source>
        <strain>cv. Johansen</strain>
    </source>
</reference>
<reference key="2">
    <citation type="journal article" date="2008" name="Nucleic Acids Res.">
        <title>The complete nucleotide sequences of the five genetically distinct plastid genomes of Oenothera, subsection Oenothera: I. Sequence evaluation and plastome evolution.</title>
        <authorList>
            <person name="Greiner S."/>
            <person name="Wang X."/>
            <person name="Rauwolf U."/>
            <person name="Silber M.V."/>
            <person name="Mayer K."/>
            <person name="Meurer J."/>
            <person name="Haberer G."/>
            <person name="Herrmann R.G."/>
        </authorList>
    </citation>
    <scope>SEQUENCE REVISION TO 12; 49; 120; 147; 164; 289 AND 293</scope>
</reference>
<protein>
    <recommendedName>
        <fullName evidence="1">NAD(P)H-quinone oxidoreductase subunit 2 A, chloroplastic</fullName>
        <ecNumber evidence="1">7.1.1.-</ecNumber>
    </recommendedName>
    <alternativeName>
        <fullName evidence="1">NAD(P)H dehydrogenase, subunit 2 A</fullName>
    </alternativeName>
    <alternativeName>
        <fullName evidence="1">NADH-plastoquinone oxidoreductase subunit 2 A</fullName>
    </alternativeName>
</protein>
<feature type="chain" id="PRO_0000117670" description="NAD(P)H-quinone oxidoreductase subunit 2 A, chloroplastic">
    <location>
        <begin position="1"/>
        <end position="510"/>
    </location>
</feature>
<feature type="transmembrane region" description="Helical" evidence="1">
    <location>
        <begin position="26"/>
        <end position="46"/>
    </location>
</feature>
<feature type="transmembrane region" description="Helical" evidence="1">
    <location>
        <begin position="57"/>
        <end position="77"/>
    </location>
</feature>
<feature type="transmembrane region" description="Helical" evidence="1">
    <location>
        <begin position="99"/>
        <end position="119"/>
    </location>
</feature>
<feature type="transmembrane region" description="Helical" evidence="1">
    <location>
        <begin position="124"/>
        <end position="144"/>
    </location>
</feature>
<feature type="transmembrane region" description="Helical" evidence="1">
    <location>
        <begin position="149"/>
        <end position="169"/>
    </location>
</feature>
<feature type="transmembrane region" description="Helical" evidence="1">
    <location>
        <begin position="183"/>
        <end position="203"/>
    </location>
</feature>
<feature type="transmembrane region" description="Helical" evidence="1">
    <location>
        <begin position="227"/>
        <end position="247"/>
    </location>
</feature>
<feature type="transmembrane region" description="Helical" evidence="1">
    <location>
        <begin position="295"/>
        <end position="315"/>
    </location>
</feature>
<feature type="transmembrane region" description="Helical" evidence="1">
    <location>
        <begin position="323"/>
        <end position="342"/>
    </location>
</feature>
<feature type="transmembrane region" description="Helical" evidence="1">
    <location>
        <begin position="354"/>
        <end position="374"/>
    </location>
</feature>
<feature type="transmembrane region" description="Helical" evidence="1">
    <location>
        <begin position="395"/>
        <end position="415"/>
    </location>
</feature>
<feature type="transmembrane region" description="Helical" evidence="1">
    <location>
        <begin position="418"/>
        <end position="438"/>
    </location>
</feature>
<feature type="transmembrane region" description="Helical" evidence="1">
    <location>
        <begin position="484"/>
        <end position="504"/>
    </location>
</feature>
<proteinExistence type="inferred from homology"/>
<sequence>MIWHVQNENLILDSTRIFMKAFHLPLFDGSFIFPEGILIFGLILLLMIDSTSDQTDIPWFYFISSISLVMSITALLFRWREEPRILFSGNFQTNNFNEIFQFLILLCSTLCIPLSVEYIECTEMAITEFLLFVLTATLGGMFLCGANDLITIFVAPECFSLCSYLLSGYTKKDVRSNEATMKYLLMGGASSSILVHGFSWLYGSSGGEIELQEIVNGLINTQMYNSPGISIALIFITVGIGFKLSPAPSHQWTPDVYEGSPTPVVAFLSVTSKVAASASATRIFDIPFYFSSNEWHPLLEILAILSMILGNLIAITQTSMKRMLAYSSIGQIGYVIIGIIVGDANGGYASMITYMLFYISMNLGTFACIVLFGLRTGTDNIRDYAGLYTKDPFLALSLALCLLSLGGLPPLAGFFGKLHLFWCGWQAGLYFLVSIGLFTSVVSIYYYLKIIKLLMTGRKQEITPHVRNYRRSPLRSNNSIELSMIVCVIASTIPGISMNPIIAIAQDTLF</sequence>
<geneLocation type="chloroplast"/>
<dbReference type="EC" id="7.1.1.-" evidence="1"/>
<dbReference type="EMBL" id="AJ271079">
    <property type="protein sequence ID" value="CAP58407.1"/>
    <property type="molecule type" value="Genomic_DNA"/>
</dbReference>
<dbReference type="SMR" id="P0CD10"/>
<dbReference type="GO" id="GO:0009535">
    <property type="term" value="C:chloroplast thylakoid membrane"/>
    <property type="evidence" value="ECO:0007669"/>
    <property type="project" value="UniProtKB-SubCell"/>
</dbReference>
<dbReference type="GO" id="GO:0008137">
    <property type="term" value="F:NADH dehydrogenase (ubiquinone) activity"/>
    <property type="evidence" value="ECO:0007669"/>
    <property type="project" value="InterPro"/>
</dbReference>
<dbReference type="GO" id="GO:0048038">
    <property type="term" value="F:quinone binding"/>
    <property type="evidence" value="ECO:0007669"/>
    <property type="project" value="UniProtKB-KW"/>
</dbReference>
<dbReference type="GO" id="GO:0042773">
    <property type="term" value="P:ATP synthesis coupled electron transport"/>
    <property type="evidence" value="ECO:0007669"/>
    <property type="project" value="InterPro"/>
</dbReference>
<dbReference type="GO" id="GO:0019684">
    <property type="term" value="P:photosynthesis, light reaction"/>
    <property type="evidence" value="ECO:0007669"/>
    <property type="project" value="UniProtKB-UniRule"/>
</dbReference>
<dbReference type="HAMAP" id="MF_00445">
    <property type="entry name" value="NDH1_NuoN_1"/>
    <property type="match status" value="1"/>
</dbReference>
<dbReference type="InterPro" id="IPR010096">
    <property type="entry name" value="NADH-Q_OxRdtase_suN/2"/>
</dbReference>
<dbReference type="InterPro" id="IPR001750">
    <property type="entry name" value="ND/Mrp_TM"/>
</dbReference>
<dbReference type="InterPro" id="IPR045693">
    <property type="entry name" value="Ndh2_N"/>
</dbReference>
<dbReference type="NCBIfam" id="TIGR01770">
    <property type="entry name" value="NDH_I_N"/>
    <property type="match status" value="1"/>
</dbReference>
<dbReference type="NCBIfam" id="NF002701">
    <property type="entry name" value="PRK02504.1"/>
    <property type="match status" value="1"/>
</dbReference>
<dbReference type="PANTHER" id="PTHR22773">
    <property type="entry name" value="NADH DEHYDROGENASE"/>
    <property type="match status" value="1"/>
</dbReference>
<dbReference type="Pfam" id="PF19530">
    <property type="entry name" value="Ndh2_N"/>
    <property type="match status" value="1"/>
</dbReference>
<dbReference type="Pfam" id="PF00361">
    <property type="entry name" value="Proton_antipo_M"/>
    <property type="match status" value="1"/>
</dbReference>
<evidence type="ECO:0000255" key="1">
    <source>
        <dbReference type="HAMAP-Rule" id="MF_00445"/>
    </source>
</evidence>
<comment type="function">
    <text evidence="1">NDH shuttles electrons from NAD(P)H:plastoquinone, via FMN and iron-sulfur (Fe-S) centers, to quinones in the photosynthetic chain and possibly in a chloroplast respiratory chain. The immediate electron acceptor for the enzyme in this species is believed to be plastoquinone. Couples the redox reaction to proton translocation, and thus conserves the redox energy in a proton gradient.</text>
</comment>
<comment type="catalytic activity">
    <reaction evidence="1">
        <text>a plastoquinone + NADH + (n+1) H(+)(in) = a plastoquinol + NAD(+) + n H(+)(out)</text>
        <dbReference type="Rhea" id="RHEA:42608"/>
        <dbReference type="Rhea" id="RHEA-COMP:9561"/>
        <dbReference type="Rhea" id="RHEA-COMP:9562"/>
        <dbReference type="ChEBI" id="CHEBI:15378"/>
        <dbReference type="ChEBI" id="CHEBI:17757"/>
        <dbReference type="ChEBI" id="CHEBI:57540"/>
        <dbReference type="ChEBI" id="CHEBI:57945"/>
        <dbReference type="ChEBI" id="CHEBI:62192"/>
    </reaction>
</comment>
<comment type="catalytic activity">
    <reaction evidence="1">
        <text>a plastoquinone + NADPH + (n+1) H(+)(in) = a plastoquinol + NADP(+) + n H(+)(out)</text>
        <dbReference type="Rhea" id="RHEA:42612"/>
        <dbReference type="Rhea" id="RHEA-COMP:9561"/>
        <dbReference type="Rhea" id="RHEA-COMP:9562"/>
        <dbReference type="ChEBI" id="CHEBI:15378"/>
        <dbReference type="ChEBI" id="CHEBI:17757"/>
        <dbReference type="ChEBI" id="CHEBI:57783"/>
        <dbReference type="ChEBI" id="CHEBI:58349"/>
        <dbReference type="ChEBI" id="CHEBI:62192"/>
    </reaction>
</comment>
<comment type="subunit">
    <text evidence="1">NDH is composed of at least 16 different subunits, 5 of which are encoded in the nucleus.</text>
</comment>
<comment type="subcellular location">
    <subcellularLocation>
        <location evidence="1">Plastid</location>
        <location evidence="1">Chloroplast thylakoid membrane</location>
        <topology evidence="1">Multi-pass membrane protein</topology>
    </subcellularLocation>
</comment>
<comment type="similarity">
    <text evidence="1">Belongs to the complex I subunit 2 family.</text>
</comment>
<gene>
    <name evidence="1" type="primary">ndhB1</name>
</gene>